<gene>
    <name evidence="8" type="primary">Smok3b</name>
</gene>
<keyword id="KW-0067">ATP-binding</keyword>
<keyword id="KW-0418">Kinase</keyword>
<keyword id="KW-0547">Nucleotide-binding</keyword>
<keyword id="KW-1185">Reference proteome</keyword>
<keyword id="KW-0723">Serine/threonine-protein kinase</keyword>
<keyword id="KW-0808">Transferase</keyword>
<sequence>MGPGSQQKSEKLRSKSPLADMDGLHAQYVMLETIGHGGCATVKLAQHRLTGTHVAVKTIRKREYWCNRVISEVELLMMADHPNIISLLQVIETKKKVYLIMELCKGKSLYQHIRKAGYLQEHEARALFKQLLSAMNYCHNQGIVHRDLKPDNIMVEKDGKVKIIDFGLGTKVKPGQKLNLFCGTYPFSAPEVLLSTPYDGPKIDVWTLGVVLYFMVTGKIPFDACSIKKLVKRILAGKYSIPSRLSAELQDLLSLLMTANPKLRPTVAEVMVHPWVTEGSGVFPDPCEEQTPLKPDPAIVKAMGHIGFQAQDIEDSLRQRKFNQTMASYCLLKKQILKECDRPTRARPVNPSVTPFPSLVDTATTRLGLRRRENEPTCPWSSANRQVSVCGKSTSKKRDRRVSWPSVLGRPRHTAPTMDHTRTRTRSVPCICSMFCTVQPNSSEESTQGHTRASAADKPVHSRGWPRGIKGWTRMIGNAMRKLCCCIPSKETSHLGQNRVSPKK</sequence>
<name>SMK3B_MOUSE</name>
<reference key="1">
    <citation type="journal article" date="2005" name="Science">
        <title>The transcriptional landscape of the mammalian genome.</title>
        <authorList>
            <person name="Carninci P."/>
            <person name="Kasukawa T."/>
            <person name="Katayama S."/>
            <person name="Gough J."/>
            <person name="Frith M.C."/>
            <person name="Maeda N."/>
            <person name="Oyama R."/>
            <person name="Ravasi T."/>
            <person name="Lenhard B."/>
            <person name="Wells C."/>
            <person name="Kodzius R."/>
            <person name="Shimokawa K."/>
            <person name="Bajic V.B."/>
            <person name="Brenner S.E."/>
            <person name="Batalov S."/>
            <person name="Forrest A.R."/>
            <person name="Zavolan M."/>
            <person name="Davis M.J."/>
            <person name="Wilming L.G."/>
            <person name="Aidinis V."/>
            <person name="Allen J.E."/>
            <person name="Ambesi-Impiombato A."/>
            <person name="Apweiler R."/>
            <person name="Aturaliya R.N."/>
            <person name="Bailey T.L."/>
            <person name="Bansal M."/>
            <person name="Baxter L."/>
            <person name="Beisel K.W."/>
            <person name="Bersano T."/>
            <person name="Bono H."/>
            <person name="Chalk A.M."/>
            <person name="Chiu K.P."/>
            <person name="Choudhary V."/>
            <person name="Christoffels A."/>
            <person name="Clutterbuck D.R."/>
            <person name="Crowe M.L."/>
            <person name="Dalla E."/>
            <person name="Dalrymple B.P."/>
            <person name="de Bono B."/>
            <person name="Della Gatta G."/>
            <person name="di Bernardo D."/>
            <person name="Down T."/>
            <person name="Engstrom P."/>
            <person name="Fagiolini M."/>
            <person name="Faulkner G."/>
            <person name="Fletcher C.F."/>
            <person name="Fukushima T."/>
            <person name="Furuno M."/>
            <person name="Futaki S."/>
            <person name="Gariboldi M."/>
            <person name="Georgii-Hemming P."/>
            <person name="Gingeras T.R."/>
            <person name="Gojobori T."/>
            <person name="Green R.E."/>
            <person name="Gustincich S."/>
            <person name="Harbers M."/>
            <person name="Hayashi Y."/>
            <person name="Hensch T.K."/>
            <person name="Hirokawa N."/>
            <person name="Hill D."/>
            <person name="Huminiecki L."/>
            <person name="Iacono M."/>
            <person name="Ikeo K."/>
            <person name="Iwama A."/>
            <person name="Ishikawa T."/>
            <person name="Jakt M."/>
            <person name="Kanapin A."/>
            <person name="Katoh M."/>
            <person name="Kawasawa Y."/>
            <person name="Kelso J."/>
            <person name="Kitamura H."/>
            <person name="Kitano H."/>
            <person name="Kollias G."/>
            <person name="Krishnan S.P."/>
            <person name="Kruger A."/>
            <person name="Kummerfeld S.K."/>
            <person name="Kurochkin I.V."/>
            <person name="Lareau L.F."/>
            <person name="Lazarevic D."/>
            <person name="Lipovich L."/>
            <person name="Liu J."/>
            <person name="Liuni S."/>
            <person name="McWilliam S."/>
            <person name="Madan Babu M."/>
            <person name="Madera M."/>
            <person name="Marchionni L."/>
            <person name="Matsuda H."/>
            <person name="Matsuzawa S."/>
            <person name="Miki H."/>
            <person name="Mignone F."/>
            <person name="Miyake S."/>
            <person name="Morris K."/>
            <person name="Mottagui-Tabar S."/>
            <person name="Mulder N."/>
            <person name="Nakano N."/>
            <person name="Nakauchi H."/>
            <person name="Ng P."/>
            <person name="Nilsson R."/>
            <person name="Nishiguchi S."/>
            <person name="Nishikawa S."/>
            <person name="Nori F."/>
            <person name="Ohara O."/>
            <person name="Okazaki Y."/>
            <person name="Orlando V."/>
            <person name="Pang K.C."/>
            <person name="Pavan W.J."/>
            <person name="Pavesi G."/>
            <person name="Pesole G."/>
            <person name="Petrovsky N."/>
            <person name="Piazza S."/>
            <person name="Reed J."/>
            <person name="Reid J.F."/>
            <person name="Ring B.Z."/>
            <person name="Ringwald M."/>
            <person name="Rost B."/>
            <person name="Ruan Y."/>
            <person name="Salzberg S.L."/>
            <person name="Sandelin A."/>
            <person name="Schneider C."/>
            <person name="Schoenbach C."/>
            <person name="Sekiguchi K."/>
            <person name="Semple C.A."/>
            <person name="Seno S."/>
            <person name="Sessa L."/>
            <person name="Sheng Y."/>
            <person name="Shibata Y."/>
            <person name="Shimada H."/>
            <person name="Shimada K."/>
            <person name="Silva D."/>
            <person name="Sinclair B."/>
            <person name="Sperling S."/>
            <person name="Stupka E."/>
            <person name="Sugiura K."/>
            <person name="Sultana R."/>
            <person name="Takenaka Y."/>
            <person name="Taki K."/>
            <person name="Tammoja K."/>
            <person name="Tan S.L."/>
            <person name="Tang S."/>
            <person name="Taylor M.S."/>
            <person name="Tegner J."/>
            <person name="Teichmann S.A."/>
            <person name="Ueda H.R."/>
            <person name="van Nimwegen E."/>
            <person name="Verardo R."/>
            <person name="Wei C.L."/>
            <person name="Yagi K."/>
            <person name="Yamanishi H."/>
            <person name="Zabarovsky E."/>
            <person name="Zhu S."/>
            <person name="Zimmer A."/>
            <person name="Hide W."/>
            <person name="Bult C."/>
            <person name="Grimmond S.M."/>
            <person name="Teasdale R.D."/>
            <person name="Liu E.T."/>
            <person name="Brusic V."/>
            <person name="Quackenbush J."/>
            <person name="Wahlestedt C."/>
            <person name="Mattick J.S."/>
            <person name="Hume D.A."/>
            <person name="Kai C."/>
            <person name="Sasaki D."/>
            <person name="Tomaru Y."/>
            <person name="Fukuda S."/>
            <person name="Kanamori-Katayama M."/>
            <person name="Suzuki M."/>
            <person name="Aoki J."/>
            <person name="Arakawa T."/>
            <person name="Iida J."/>
            <person name="Imamura K."/>
            <person name="Itoh M."/>
            <person name="Kato T."/>
            <person name="Kawaji H."/>
            <person name="Kawagashira N."/>
            <person name="Kawashima T."/>
            <person name="Kojima M."/>
            <person name="Kondo S."/>
            <person name="Konno H."/>
            <person name="Nakano K."/>
            <person name="Ninomiya N."/>
            <person name="Nishio T."/>
            <person name="Okada M."/>
            <person name="Plessy C."/>
            <person name="Shibata K."/>
            <person name="Shiraki T."/>
            <person name="Suzuki S."/>
            <person name="Tagami M."/>
            <person name="Waki K."/>
            <person name="Watahiki A."/>
            <person name="Okamura-Oho Y."/>
            <person name="Suzuki H."/>
            <person name="Kawai J."/>
            <person name="Hayashizaki Y."/>
        </authorList>
    </citation>
    <scope>NUCLEOTIDE SEQUENCE [LARGE SCALE MRNA]</scope>
    <source>
        <strain>C57BL/6J</strain>
        <tissue>Testis</tissue>
    </source>
</reference>
<reference key="2">
    <citation type="journal article" date="1999" name="Nature">
        <title>A protein kinase encoded by the t complex responder gene causes non-Mendelian inheritance.</title>
        <authorList>
            <person name="Herrmann B.G."/>
            <person name="Koschorz B."/>
            <person name="Wertz K."/>
            <person name="McLaughlin K.J."/>
            <person name="Kispert A."/>
        </authorList>
    </citation>
    <scope>FUNCTION</scope>
    <scope>TISSUE SPECIFICITY</scope>
</reference>
<evidence type="ECO:0000250" key="1">
    <source>
        <dbReference type="UniProtKB" id="Q9QYZ3"/>
    </source>
</evidence>
<evidence type="ECO:0000255" key="2"/>
<evidence type="ECO:0000255" key="3">
    <source>
        <dbReference type="PROSITE-ProRule" id="PRU00159"/>
    </source>
</evidence>
<evidence type="ECO:0000255" key="4">
    <source>
        <dbReference type="PROSITE-ProRule" id="PRU10027"/>
    </source>
</evidence>
<evidence type="ECO:0000256" key="5">
    <source>
        <dbReference type="SAM" id="MobiDB-lite"/>
    </source>
</evidence>
<evidence type="ECO:0000269" key="6">
    <source>
    </source>
</evidence>
<evidence type="ECO:0000305" key="7"/>
<evidence type="ECO:0000312" key="8">
    <source>
        <dbReference type="MGI" id="MGI:3615348"/>
    </source>
</evidence>
<organism>
    <name type="scientific">Mus musculus</name>
    <name type="common">Mouse</name>
    <dbReference type="NCBI Taxonomy" id="10090"/>
    <lineage>
        <taxon>Eukaryota</taxon>
        <taxon>Metazoa</taxon>
        <taxon>Chordata</taxon>
        <taxon>Craniata</taxon>
        <taxon>Vertebrata</taxon>
        <taxon>Euteleostomi</taxon>
        <taxon>Mammalia</taxon>
        <taxon>Eutheria</taxon>
        <taxon>Euarchontoglires</taxon>
        <taxon>Glires</taxon>
        <taxon>Rodentia</taxon>
        <taxon>Myomorpha</taxon>
        <taxon>Muroidea</taxon>
        <taxon>Muridae</taxon>
        <taxon>Murinae</taxon>
        <taxon>Mus</taxon>
        <taxon>Mus</taxon>
    </lineage>
</organism>
<protein>
    <recommendedName>
        <fullName evidence="8">Sperm motility kinase 3B</fullName>
        <ecNumber evidence="1">2.7.11.1</ecNumber>
    </recommendedName>
</protein>
<feature type="chain" id="PRO_0000439229" description="Sperm motility kinase 3B">
    <location>
        <begin position="1"/>
        <end position="504"/>
    </location>
</feature>
<feature type="domain" description="Protein kinase" evidence="3">
    <location>
        <begin position="28"/>
        <end position="276"/>
    </location>
</feature>
<feature type="domain" description="UBA" evidence="2">
    <location>
        <begin position="294"/>
        <end position="334"/>
    </location>
</feature>
<feature type="region of interest" description="Disordered" evidence="5">
    <location>
        <begin position="389"/>
        <end position="421"/>
    </location>
</feature>
<feature type="region of interest" description="Disordered" evidence="5">
    <location>
        <begin position="441"/>
        <end position="468"/>
    </location>
</feature>
<feature type="compositionally biased region" description="Polar residues" evidence="5">
    <location>
        <begin position="441"/>
        <end position="451"/>
    </location>
</feature>
<feature type="active site" description="Proton acceptor" evidence="3 4">
    <location>
        <position position="147"/>
    </location>
</feature>
<feature type="binding site" evidence="3">
    <location>
        <begin position="34"/>
        <end position="42"/>
    </location>
    <ligand>
        <name>ATP</name>
        <dbReference type="ChEBI" id="CHEBI:30616"/>
    </ligand>
</feature>
<feature type="binding site" evidence="3">
    <location>
        <position position="57"/>
    </location>
    <ligand>
        <name>ATP</name>
        <dbReference type="ChEBI" id="CHEBI:30616"/>
    </ligand>
</feature>
<comment type="function">
    <text evidence="6">May play a role in sperm motility, especially in the regulation of flagellar function.</text>
</comment>
<comment type="catalytic activity">
    <reaction evidence="1">
        <text>L-seryl-[protein] + ATP = O-phospho-L-seryl-[protein] + ADP + H(+)</text>
        <dbReference type="Rhea" id="RHEA:17989"/>
        <dbReference type="Rhea" id="RHEA-COMP:9863"/>
        <dbReference type="Rhea" id="RHEA-COMP:11604"/>
        <dbReference type="ChEBI" id="CHEBI:15378"/>
        <dbReference type="ChEBI" id="CHEBI:29999"/>
        <dbReference type="ChEBI" id="CHEBI:30616"/>
        <dbReference type="ChEBI" id="CHEBI:83421"/>
        <dbReference type="ChEBI" id="CHEBI:456216"/>
        <dbReference type="EC" id="2.7.11.1"/>
    </reaction>
</comment>
<comment type="catalytic activity">
    <reaction evidence="1">
        <text>L-threonyl-[protein] + ATP = O-phospho-L-threonyl-[protein] + ADP + H(+)</text>
        <dbReference type="Rhea" id="RHEA:46608"/>
        <dbReference type="Rhea" id="RHEA-COMP:11060"/>
        <dbReference type="Rhea" id="RHEA-COMP:11605"/>
        <dbReference type="ChEBI" id="CHEBI:15378"/>
        <dbReference type="ChEBI" id="CHEBI:30013"/>
        <dbReference type="ChEBI" id="CHEBI:30616"/>
        <dbReference type="ChEBI" id="CHEBI:61977"/>
        <dbReference type="ChEBI" id="CHEBI:456216"/>
        <dbReference type="EC" id="2.7.11.1"/>
    </reaction>
</comment>
<comment type="tissue specificity">
    <text evidence="6">Testis-specific. Expressed in the testis from 22 days postpartum (22 dpp).</text>
</comment>
<comment type="similarity">
    <text evidence="7">Belongs to the protein kinase superfamily. CAMK Ser/Thr protein kinase family. Smok subfamily.</text>
</comment>
<accession>C0HKC9</accession>
<accession>Q9QYZ5</accession>
<dbReference type="EC" id="2.7.11.1" evidence="1"/>
<dbReference type="EMBL" id="AK133180">
    <property type="protein sequence ID" value="BAE21545.1"/>
    <property type="molecule type" value="mRNA"/>
</dbReference>
<dbReference type="CCDS" id="CCDS39339.1"/>
<dbReference type="RefSeq" id="NP_001034978.1">
    <property type="nucleotide sequence ID" value="NM_001039889.3"/>
</dbReference>
<dbReference type="SMR" id="C0HKC9"/>
<dbReference type="FunCoup" id="C0HKC9">
    <property type="interactions" value="93"/>
</dbReference>
<dbReference type="iPTMnet" id="C0HKC9"/>
<dbReference type="PhosphoSitePlus" id="C0HKC9"/>
<dbReference type="DNASU" id="545814"/>
<dbReference type="Ensembl" id="ENSMUST00000085886.3">
    <property type="protein sequence ID" value="ENSMUSP00000083049.3"/>
    <property type="gene ID" value="ENSMUSG00000075599.5"/>
</dbReference>
<dbReference type="Ensembl" id="ENSMUST00000100537.3">
    <property type="protein sequence ID" value="ENSMUSP00000098105.3"/>
    <property type="gene ID" value="ENSMUSG00000079156.12"/>
</dbReference>
<dbReference type="Ensembl" id="ENSMUST00000166206.9">
    <property type="protein sequence ID" value="ENSMUSP00000129450.3"/>
    <property type="gene ID" value="ENSMUSG00000079156.12"/>
</dbReference>
<dbReference type="Ensembl" id="ENSMUST00000171498.3">
    <property type="protein sequence ID" value="ENSMUSP00000125938.2"/>
    <property type="gene ID" value="ENSMUSG00000075599.5"/>
</dbReference>
<dbReference type="GeneID" id="622474"/>
<dbReference type="KEGG" id="mmu:545814"/>
<dbReference type="KEGG" id="mmu:622474"/>
<dbReference type="AGR" id="MGI:3615348"/>
<dbReference type="CTD" id="545814"/>
<dbReference type="CTD" id="622474"/>
<dbReference type="MGI" id="MGI:3615348">
    <property type="gene designation" value="Smok3b"/>
</dbReference>
<dbReference type="VEuPathDB" id="HostDB:ENSMUSG00000075599"/>
<dbReference type="VEuPathDB" id="HostDB:ENSMUSG00000079156"/>
<dbReference type="GeneTree" id="ENSGT00940000160886"/>
<dbReference type="InParanoid" id="C0HKC9"/>
<dbReference type="OMA" id="CAISAPC"/>
<dbReference type="OrthoDB" id="9633915at2759"/>
<dbReference type="BioGRID-ORCS" id="545814">
    <property type="hits" value="1 hit in 38 CRISPR screens"/>
</dbReference>
<dbReference type="BioGRID-ORCS" id="622474">
    <property type="hits" value="2 hits in 37 CRISPR screens"/>
</dbReference>
<dbReference type="PRO" id="PR:C0HKC9"/>
<dbReference type="Proteomes" id="UP000000589">
    <property type="component" value="Chromosome 5"/>
</dbReference>
<dbReference type="RNAct" id="C0HKC9">
    <property type="molecule type" value="protein"/>
</dbReference>
<dbReference type="Bgee" id="ENSMUSG00000075599">
    <property type="expression patterns" value="Expressed in testis and 2 other cell types or tissues"/>
</dbReference>
<dbReference type="ExpressionAtlas" id="C0HKC9">
    <property type="expression patterns" value="baseline"/>
</dbReference>
<dbReference type="GO" id="GO:0005524">
    <property type="term" value="F:ATP binding"/>
    <property type="evidence" value="ECO:0007669"/>
    <property type="project" value="UniProtKB-KW"/>
</dbReference>
<dbReference type="GO" id="GO:0106310">
    <property type="term" value="F:protein serine kinase activity"/>
    <property type="evidence" value="ECO:0007669"/>
    <property type="project" value="RHEA"/>
</dbReference>
<dbReference type="GO" id="GO:0004674">
    <property type="term" value="F:protein serine/threonine kinase activity"/>
    <property type="evidence" value="ECO:0007669"/>
    <property type="project" value="UniProtKB-KW"/>
</dbReference>
<dbReference type="CDD" id="cd14003">
    <property type="entry name" value="STKc_AMPK-like"/>
    <property type="match status" value="1"/>
</dbReference>
<dbReference type="CDD" id="cd14337">
    <property type="entry name" value="UBA_MARK_Par1"/>
    <property type="match status" value="1"/>
</dbReference>
<dbReference type="FunFam" id="1.10.510.10:FF:000592">
    <property type="entry name" value="CAMK family protein kinase"/>
    <property type="match status" value="1"/>
</dbReference>
<dbReference type="FunFam" id="1.10.8.10:FF:000005">
    <property type="entry name" value="Non-specific serine/threonine protein kinase"/>
    <property type="match status" value="1"/>
</dbReference>
<dbReference type="FunFam" id="3.30.200.20:FF:000003">
    <property type="entry name" value="Non-specific serine/threonine protein kinase"/>
    <property type="match status" value="1"/>
</dbReference>
<dbReference type="Gene3D" id="1.10.8.10">
    <property type="entry name" value="DNA helicase RuvA subunit, C-terminal domain"/>
    <property type="match status" value="1"/>
</dbReference>
<dbReference type="Gene3D" id="3.30.200.20">
    <property type="entry name" value="Phosphorylase Kinase, domain 1"/>
    <property type="match status" value="1"/>
</dbReference>
<dbReference type="Gene3D" id="1.10.510.10">
    <property type="entry name" value="Transferase(Phosphotransferase) domain 1"/>
    <property type="match status" value="1"/>
</dbReference>
<dbReference type="InterPro" id="IPR011009">
    <property type="entry name" value="Kinase-like_dom_sf"/>
</dbReference>
<dbReference type="InterPro" id="IPR000719">
    <property type="entry name" value="Prot_kinase_dom"/>
</dbReference>
<dbReference type="InterPro" id="IPR008271">
    <property type="entry name" value="Ser/Thr_kinase_AS"/>
</dbReference>
<dbReference type="PANTHER" id="PTHR24346">
    <property type="entry name" value="MAP/MICROTUBULE AFFINITY-REGULATING KINASE"/>
    <property type="match status" value="1"/>
</dbReference>
<dbReference type="PANTHER" id="PTHR24346:SF95">
    <property type="entry name" value="SPERM MOTILITY KINASE 3A"/>
    <property type="match status" value="1"/>
</dbReference>
<dbReference type="Pfam" id="PF00069">
    <property type="entry name" value="Pkinase"/>
    <property type="match status" value="1"/>
</dbReference>
<dbReference type="SMART" id="SM00220">
    <property type="entry name" value="S_TKc"/>
    <property type="match status" value="1"/>
</dbReference>
<dbReference type="SUPFAM" id="SSF56112">
    <property type="entry name" value="Protein kinase-like (PK-like)"/>
    <property type="match status" value="1"/>
</dbReference>
<dbReference type="PROSITE" id="PS50011">
    <property type="entry name" value="PROTEIN_KINASE_DOM"/>
    <property type="match status" value="1"/>
</dbReference>
<dbReference type="PROSITE" id="PS00108">
    <property type="entry name" value="PROTEIN_KINASE_ST"/>
    <property type="match status" value="1"/>
</dbReference>
<proteinExistence type="evidence at transcript level"/>